<gene>
    <name type="primary">Est-5A</name>
    <name type="synonym">Est5A</name>
</gene>
<feature type="signal peptide" evidence="2">
    <location>
        <begin position="1"/>
        <end position="19"/>
    </location>
</feature>
<feature type="chain" id="PRO_0000008553" description="Esterase-5A">
    <location>
        <begin position="20"/>
        <end position="548"/>
    </location>
</feature>
<feature type="active site" description="Acyl-ester intermediate" evidence="3">
    <location>
        <position position="210"/>
    </location>
</feature>
<feature type="glycosylation site" description="N-linked (GlcNAc...) asparagine" evidence="2">
    <location>
        <position position="95"/>
    </location>
</feature>
<feature type="glycosylation site" description="N-linked (GlcNAc...) asparagine" evidence="2">
    <location>
        <position position="116"/>
    </location>
</feature>
<feature type="glycosylation site" description="N-linked (GlcNAc...) asparagine" evidence="2">
    <location>
        <position position="479"/>
    </location>
</feature>
<feature type="disulfide bond" evidence="1">
    <location>
        <begin position="87"/>
        <end position="106"/>
    </location>
</feature>
<feature type="disulfide bond" evidence="1">
    <location>
        <begin position="262"/>
        <end position="274"/>
    </location>
</feature>
<feature type="disulfide bond" evidence="2">
    <location>
        <begin position="518"/>
        <end position="539"/>
    </location>
</feature>
<evidence type="ECO:0000250" key="1"/>
<evidence type="ECO:0000255" key="2"/>
<evidence type="ECO:0000255" key="3">
    <source>
        <dbReference type="PROSITE-ProRule" id="PRU10039"/>
    </source>
</evidence>
<evidence type="ECO:0000305" key="4"/>
<accession>O16173</accession>
<comment type="catalytic activity">
    <reaction evidence="3">
        <text>a carboxylic ester + H2O = an alcohol + a carboxylate + H(+)</text>
        <dbReference type="Rhea" id="RHEA:21164"/>
        <dbReference type="ChEBI" id="CHEBI:15377"/>
        <dbReference type="ChEBI" id="CHEBI:15378"/>
        <dbReference type="ChEBI" id="CHEBI:29067"/>
        <dbReference type="ChEBI" id="CHEBI:30879"/>
        <dbReference type="ChEBI" id="CHEBI:33308"/>
        <dbReference type="EC" id="3.1.1.1"/>
    </reaction>
</comment>
<comment type="subcellular location">
    <subcellularLocation>
        <location>Secreted</location>
    </subcellularLocation>
</comment>
<comment type="similarity">
    <text evidence="4">Belongs to the type-B carboxylesterase/lipase family.</text>
</comment>
<reference key="1">
    <citation type="journal article" date="1998" name="Genetics">
        <title>The role of gene conversion in determining sequence variation and divergence in the Est-5 gene family in Drosophila pseudoobscura.</title>
        <authorList>
            <person name="King L.M."/>
        </authorList>
    </citation>
    <scope>NUCLEOTIDE SEQUENCE [GENOMIC DNA]</scope>
</reference>
<sequence length="548" mass="61556">MHLVRWLICLIQLWIQLGAAGSVTLLDPLLIEIPNGKLRGRDNGHYYSYEAIPYAEPPTGELRFEVPKPYKQQWTNTFDATQPPVLCMQWNQFINGTNKLLGVEDCLTVSVYRPKNSSRNNFPVVANLHGGAFMFGGPSQYGHENIMREGSVILVTIGYRLGPLGFVSTGDADLSGNFGLKDQRLALLWIKQNIASFGGEPENILVVGHSAGGASVHLQMLREDFSKVAKAAISFSGNSLDPWVIQQGLRGRAFELGRIVGCGQASDSVTLKKCLKSKPAIEIVSAVRSFLVFSYVPFTPFGPAIESPDAPEAFITHHPIDIIKRGKFSQVPWAVTYTTEDGGYNAALLLEKQASSGRELIVDLNDRWFDWAPYLLFYRDSMTTIKDMDDYSRKLRQEYLGDRRFSVESYWDVQRMFTDLLFKNSVTVSVDLHRKYGKSPVYAFVYDNPSEVGVGQILSGRNDVYFGTVHGDDVFLIFNVSFVPANRRPDEEIISRNFIKMLEYFALSTDDTMAYGDCVFQNNVGSKHMQLLSITRDGCENKQLNFFI</sequence>
<dbReference type="EC" id="3.1.1.1"/>
<dbReference type="EMBL" id="AF016111">
    <property type="protein sequence ID" value="AAB70224.1"/>
    <property type="molecule type" value="Genomic_DNA"/>
</dbReference>
<dbReference type="SMR" id="O16173"/>
<dbReference type="ESTHER" id="drope-est5a">
    <property type="family name" value="Carb_B_Arthropoda"/>
</dbReference>
<dbReference type="MEROPS" id="S09.947"/>
<dbReference type="GlyCosmos" id="O16173">
    <property type="glycosylation" value="3 sites, No reported glycans"/>
</dbReference>
<dbReference type="eggNOG" id="KOG1516">
    <property type="taxonomic scope" value="Eukaryota"/>
</dbReference>
<dbReference type="OrthoDB" id="6846267at2759"/>
<dbReference type="GO" id="GO:0005576">
    <property type="term" value="C:extracellular region"/>
    <property type="evidence" value="ECO:0007669"/>
    <property type="project" value="UniProtKB-SubCell"/>
</dbReference>
<dbReference type="GO" id="GO:0106435">
    <property type="term" value="F:carboxylesterase activity"/>
    <property type="evidence" value="ECO:0007669"/>
    <property type="project" value="UniProtKB-EC"/>
</dbReference>
<dbReference type="CDD" id="cd00312">
    <property type="entry name" value="Esterase_lipase"/>
    <property type="match status" value="1"/>
</dbReference>
<dbReference type="FunFam" id="3.40.50.1820:FF:000378">
    <property type="entry name" value="Carboxylic ester hydrolase"/>
    <property type="match status" value="1"/>
</dbReference>
<dbReference type="Gene3D" id="3.40.50.1820">
    <property type="entry name" value="alpha/beta hydrolase"/>
    <property type="match status" value="1"/>
</dbReference>
<dbReference type="InterPro" id="IPR029058">
    <property type="entry name" value="AB_hydrolase_fold"/>
</dbReference>
<dbReference type="InterPro" id="IPR002018">
    <property type="entry name" value="CarbesteraseB"/>
</dbReference>
<dbReference type="InterPro" id="IPR019826">
    <property type="entry name" value="Carboxylesterase_B_AS"/>
</dbReference>
<dbReference type="InterPro" id="IPR019819">
    <property type="entry name" value="Carboxylesterase_B_CS"/>
</dbReference>
<dbReference type="PANTHER" id="PTHR43142">
    <property type="entry name" value="CARBOXYLIC ESTER HYDROLASE"/>
    <property type="match status" value="1"/>
</dbReference>
<dbReference type="PANTHER" id="PTHR43142:SF1">
    <property type="entry name" value="CARBOXYLIC ESTER HYDROLASE"/>
    <property type="match status" value="1"/>
</dbReference>
<dbReference type="Pfam" id="PF00135">
    <property type="entry name" value="COesterase"/>
    <property type="match status" value="1"/>
</dbReference>
<dbReference type="SUPFAM" id="SSF53474">
    <property type="entry name" value="alpha/beta-Hydrolases"/>
    <property type="match status" value="1"/>
</dbReference>
<dbReference type="PROSITE" id="PS00122">
    <property type="entry name" value="CARBOXYLESTERASE_B_1"/>
    <property type="match status" value="1"/>
</dbReference>
<dbReference type="PROSITE" id="PS00941">
    <property type="entry name" value="CARBOXYLESTERASE_B_2"/>
    <property type="match status" value="1"/>
</dbReference>
<organism>
    <name type="scientific">Drosophila persimilis</name>
    <name type="common">Fruit fly</name>
    <dbReference type="NCBI Taxonomy" id="7234"/>
    <lineage>
        <taxon>Eukaryota</taxon>
        <taxon>Metazoa</taxon>
        <taxon>Ecdysozoa</taxon>
        <taxon>Arthropoda</taxon>
        <taxon>Hexapoda</taxon>
        <taxon>Insecta</taxon>
        <taxon>Pterygota</taxon>
        <taxon>Neoptera</taxon>
        <taxon>Endopterygota</taxon>
        <taxon>Diptera</taxon>
        <taxon>Brachycera</taxon>
        <taxon>Muscomorpha</taxon>
        <taxon>Ephydroidea</taxon>
        <taxon>Drosophilidae</taxon>
        <taxon>Drosophila</taxon>
        <taxon>Sophophora</taxon>
    </lineage>
</organism>
<keyword id="KW-1015">Disulfide bond</keyword>
<keyword id="KW-0325">Glycoprotein</keyword>
<keyword id="KW-0378">Hydrolase</keyword>
<keyword id="KW-0964">Secreted</keyword>
<keyword id="KW-0719">Serine esterase</keyword>
<keyword id="KW-0732">Signal</keyword>
<name>EST5A_DROPE</name>
<proteinExistence type="inferred from homology"/>
<protein>
    <recommendedName>
        <fullName>Esterase-5A</fullName>
        <shortName>Est-5A</shortName>
        <ecNumber>3.1.1.1</ecNumber>
    </recommendedName>
    <alternativeName>
        <fullName>Carboxylic-ester hydrolase 5A</fullName>
        <shortName>Carboxylesterase-5A</shortName>
    </alternativeName>
</protein>